<proteinExistence type="evidence at transcript level"/>
<organism>
    <name type="scientific">Rattus norvegicus</name>
    <name type="common">Rat</name>
    <dbReference type="NCBI Taxonomy" id="10116"/>
    <lineage>
        <taxon>Eukaryota</taxon>
        <taxon>Metazoa</taxon>
        <taxon>Chordata</taxon>
        <taxon>Craniata</taxon>
        <taxon>Vertebrata</taxon>
        <taxon>Euteleostomi</taxon>
        <taxon>Mammalia</taxon>
        <taxon>Eutheria</taxon>
        <taxon>Euarchontoglires</taxon>
        <taxon>Glires</taxon>
        <taxon>Rodentia</taxon>
        <taxon>Myomorpha</taxon>
        <taxon>Muroidea</taxon>
        <taxon>Muridae</taxon>
        <taxon>Murinae</taxon>
        <taxon>Rattus</taxon>
    </lineage>
</organism>
<dbReference type="EMBL" id="BC078985">
    <property type="protein sequence ID" value="AAH78985.1"/>
    <property type="molecule type" value="mRNA"/>
</dbReference>
<dbReference type="RefSeq" id="NP_001019462.1">
    <property type="nucleotide sequence ID" value="NM_001024291.1"/>
</dbReference>
<dbReference type="SMR" id="Q6AYM7"/>
<dbReference type="FunCoup" id="Q6AYM7">
    <property type="interactions" value="1"/>
</dbReference>
<dbReference type="STRING" id="10116.ENSRNOP00000072946"/>
<dbReference type="PhosphoSitePlus" id="Q6AYM7"/>
<dbReference type="PaxDb" id="10116-ENSRNOP00000065294"/>
<dbReference type="Ensembl" id="ENSRNOT00000077274.2">
    <property type="protein sequence ID" value="ENSRNOP00000072946.1"/>
    <property type="gene ID" value="ENSRNOG00000054336.2"/>
</dbReference>
<dbReference type="GeneID" id="499306"/>
<dbReference type="KEGG" id="rno:499306"/>
<dbReference type="UCSC" id="RGD:1563886">
    <property type="organism name" value="rat"/>
</dbReference>
<dbReference type="AGR" id="RGD:1563886"/>
<dbReference type="CTD" id="283129"/>
<dbReference type="RGD" id="1563886">
    <property type="gene designation" value="Majin"/>
</dbReference>
<dbReference type="eggNOG" id="ENOG502S50S">
    <property type="taxonomic scope" value="Eukaryota"/>
</dbReference>
<dbReference type="GeneTree" id="ENSGT00390000007971"/>
<dbReference type="HOGENOM" id="CLU_094252_1_0_1"/>
<dbReference type="InParanoid" id="Q6AYM7"/>
<dbReference type="OrthoDB" id="48782at9989"/>
<dbReference type="PhylomeDB" id="Q6AYM7"/>
<dbReference type="TreeFam" id="TF336863"/>
<dbReference type="PRO" id="PR:Q6AYM7"/>
<dbReference type="Proteomes" id="UP000002494">
    <property type="component" value="Chromosome 1"/>
</dbReference>
<dbReference type="Bgee" id="ENSRNOG00000054336">
    <property type="expression patterns" value="Expressed in testis and 2 other cell types or tissues"/>
</dbReference>
<dbReference type="GO" id="GO:0000781">
    <property type="term" value="C:chromosome, telomeric region"/>
    <property type="evidence" value="ECO:0000250"/>
    <property type="project" value="UniProtKB"/>
</dbReference>
<dbReference type="GO" id="GO:0005635">
    <property type="term" value="C:nuclear envelope"/>
    <property type="evidence" value="ECO:0000266"/>
    <property type="project" value="RGD"/>
</dbReference>
<dbReference type="GO" id="GO:0005637">
    <property type="term" value="C:nuclear inner membrane"/>
    <property type="evidence" value="ECO:0000250"/>
    <property type="project" value="UniProtKB"/>
</dbReference>
<dbReference type="GO" id="GO:0003677">
    <property type="term" value="F:DNA binding"/>
    <property type="evidence" value="ECO:0007669"/>
    <property type="project" value="UniProtKB-KW"/>
</dbReference>
<dbReference type="GO" id="GO:1990918">
    <property type="term" value="P:double-strand break repair involved in meiotic recombination"/>
    <property type="evidence" value="ECO:0000266"/>
    <property type="project" value="RGD"/>
</dbReference>
<dbReference type="GO" id="GO:0007129">
    <property type="term" value="P:homologous chromosome pairing at meiosis"/>
    <property type="evidence" value="ECO:0000250"/>
    <property type="project" value="UniProtKB"/>
</dbReference>
<dbReference type="GO" id="GO:0070197">
    <property type="term" value="P:meiotic attachment of telomere to nuclear envelope"/>
    <property type="evidence" value="ECO:0000250"/>
    <property type="project" value="UniProtKB"/>
</dbReference>
<dbReference type="GO" id="GO:0045141">
    <property type="term" value="P:meiotic telomere clustering"/>
    <property type="evidence" value="ECO:0000250"/>
    <property type="project" value="UniProtKB"/>
</dbReference>
<dbReference type="GO" id="GO:0048477">
    <property type="term" value="P:oogenesis"/>
    <property type="evidence" value="ECO:0000266"/>
    <property type="project" value="RGD"/>
</dbReference>
<dbReference type="GO" id="GO:0007283">
    <property type="term" value="P:spermatogenesis"/>
    <property type="evidence" value="ECO:0000266"/>
    <property type="project" value="RGD"/>
</dbReference>
<dbReference type="InterPro" id="IPR027816">
    <property type="entry name" value="MAJIN"/>
</dbReference>
<dbReference type="PANTHER" id="PTHR35824:SF1">
    <property type="entry name" value="MEMBRANE-ANCHORED JUNCTION PROTEIN"/>
    <property type="match status" value="1"/>
</dbReference>
<dbReference type="PANTHER" id="PTHR35824">
    <property type="entry name" value="MEMBRANE-ANCHORED JUNCTION PROTEIN MAJIN"/>
    <property type="match status" value="1"/>
</dbReference>
<dbReference type="Pfam" id="PF15077">
    <property type="entry name" value="MAJIN"/>
    <property type="match status" value="1"/>
</dbReference>
<sequence length="251" mass="28646">MSLKPFTYPFPETRFLHAGTNVYKFKIRYGNSIRGEEIEDKGVIIQELEDSIRAVLANMDSLQPFVTEHFIVFPYKSKWERVSHLKFKHGEIILTPYPFVFTLYIEMKCFAESLPSGKPTDDIPLELVLTAKEAEEATMRKRKLMEEPSTPSRPGPHRAKMETWSEASSTKKALKEHKRSWGEDSQQDTPASDSTAVTEQDPMLGHSLPGLVVPPLEHSNPPPLKEPAARGFLGFLSALFPFRYFFRKSTQ</sequence>
<feature type="chain" id="PRO_0000325834" description="Membrane-anchored junction protein">
    <location>
        <begin position="1"/>
        <end position="251"/>
    </location>
</feature>
<feature type="topological domain" description="Nuclear" evidence="4">
    <location>
        <begin position="1"/>
        <end position="227"/>
    </location>
</feature>
<feature type="transmembrane region" description="Helical" evidence="2">
    <location>
        <begin position="228"/>
        <end position="246"/>
    </location>
</feature>
<feature type="topological domain" description="Perinuclear space" evidence="4">
    <location>
        <begin position="247"/>
        <end position="251"/>
    </location>
</feature>
<feature type="region of interest" description="Disordered" evidence="3">
    <location>
        <begin position="140"/>
        <end position="225"/>
    </location>
</feature>
<feature type="compositionally biased region" description="Polar residues" evidence="3">
    <location>
        <begin position="183"/>
        <end position="198"/>
    </location>
</feature>
<evidence type="ECO:0000250" key="1">
    <source>
        <dbReference type="UniProtKB" id="Q9D992"/>
    </source>
</evidence>
<evidence type="ECO:0000255" key="2"/>
<evidence type="ECO:0000256" key="3">
    <source>
        <dbReference type="SAM" id="MobiDB-lite"/>
    </source>
</evidence>
<evidence type="ECO:0000305" key="4"/>
<name>MAJIN_RAT</name>
<protein>
    <recommendedName>
        <fullName evidence="1">Membrane-anchored junction protein</fullName>
    </recommendedName>
</protein>
<comment type="function">
    <text evidence="1">Meiosis-specific telomere-associated protein involved in meiotic telomere attachment to the nucleus inner membrane, a crucial step for homologous pairing and synapsis. Component of the MAJIN-TERB1-TERB2 complex, which promotes telomere cap exchange by mediating attachment of telomeric DNA to the inner nuclear membrane and replacement of the protective cap of telomeric chromosomes: in early meiosis, the MAJIN-TERB1-TERB2 complex associates with telomeric DNA and the shelterin/telosome complex. During prophase, the complex matures and promotes release of the shelterin/telosome complex from telomeric DNA. In the complex, MAJIN acts as the anchoring subunit to the nucleus inner membrane. MAJIN shows DNA-binding activity, possibly for the stabilization of telomere attachment on the nucleus inner membrane.</text>
</comment>
<comment type="subunit">
    <text evidence="1">Component of the MAJIN-TERB1-TERB2 complex, composed of MAJIN, TERB1 and TERB2.</text>
</comment>
<comment type="subcellular location">
    <subcellularLocation>
        <location evidence="1">Nucleus inner membrane</location>
        <topology evidence="1">Single-pass membrane protein</topology>
    </subcellularLocation>
    <subcellularLocation>
        <location evidence="1">Chromosome</location>
        <location evidence="1">Telomere</location>
    </subcellularLocation>
    <text evidence="1">In leptotene spermatocytes, localizes to telomeres that localize to the nucleus inner membrane.</text>
</comment>
<comment type="similarity">
    <text evidence="4">Belongs to the MAJIN family.</text>
</comment>
<accession>Q6AYM7</accession>
<keyword id="KW-0158">Chromosome</keyword>
<keyword id="KW-0238">DNA-binding</keyword>
<keyword id="KW-0469">Meiosis</keyword>
<keyword id="KW-0472">Membrane</keyword>
<keyword id="KW-0539">Nucleus</keyword>
<keyword id="KW-1185">Reference proteome</keyword>
<keyword id="KW-0779">Telomere</keyword>
<keyword id="KW-0812">Transmembrane</keyword>
<keyword id="KW-1133">Transmembrane helix</keyword>
<reference key="1">
    <citation type="journal article" date="2004" name="Genome Res.">
        <title>The status, quality, and expansion of the NIH full-length cDNA project: the Mammalian Gene Collection (MGC).</title>
        <authorList>
            <consortium name="The MGC Project Team"/>
        </authorList>
    </citation>
    <scope>NUCLEOTIDE SEQUENCE [LARGE SCALE MRNA]</scope>
    <source>
        <tissue>Testis</tissue>
    </source>
</reference>
<gene>
    <name evidence="1" type="primary">Majin</name>
</gene>